<evidence type="ECO:0000255" key="1">
    <source>
        <dbReference type="HAMAP-Rule" id="MF_01310"/>
    </source>
</evidence>
<evidence type="ECO:0000305" key="2"/>
<name>RR11_PSINU</name>
<geneLocation type="chloroplast"/>
<proteinExistence type="inferred from homology"/>
<dbReference type="EMBL" id="AP004638">
    <property type="protein sequence ID" value="BAB84249.1"/>
    <property type="molecule type" value="Genomic_DNA"/>
</dbReference>
<dbReference type="RefSeq" id="NP_569661.1">
    <property type="nucleotide sequence ID" value="NC_003386.1"/>
</dbReference>
<dbReference type="SMR" id="Q8WHZ0"/>
<dbReference type="GeneID" id="2545170"/>
<dbReference type="GO" id="GO:0009507">
    <property type="term" value="C:chloroplast"/>
    <property type="evidence" value="ECO:0007669"/>
    <property type="project" value="UniProtKB-SubCell"/>
</dbReference>
<dbReference type="GO" id="GO:1990904">
    <property type="term" value="C:ribonucleoprotein complex"/>
    <property type="evidence" value="ECO:0007669"/>
    <property type="project" value="UniProtKB-KW"/>
</dbReference>
<dbReference type="GO" id="GO:0005840">
    <property type="term" value="C:ribosome"/>
    <property type="evidence" value="ECO:0007669"/>
    <property type="project" value="UniProtKB-KW"/>
</dbReference>
<dbReference type="GO" id="GO:0019843">
    <property type="term" value="F:rRNA binding"/>
    <property type="evidence" value="ECO:0007669"/>
    <property type="project" value="UniProtKB-UniRule"/>
</dbReference>
<dbReference type="GO" id="GO:0003735">
    <property type="term" value="F:structural constituent of ribosome"/>
    <property type="evidence" value="ECO:0007669"/>
    <property type="project" value="InterPro"/>
</dbReference>
<dbReference type="GO" id="GO:0006412">
    <property type="term" value="P:translation"/>
    <property type="evidence" value="ECO:0007669"/>
    <property type="project" value="UniProtKB-UniRule"/>
</dbReference>
<dbReference type="Gene3D" id="3.30.420.80">
    <property type="entry name" value="Ribosomal protein S11"/>
    <property type="match status" value="1"/>
</dbReference>
<dbReference type="HAMAP" id="MF_01310">
    <property type="entry name" value="Ribosomal_uS11"/>
    <property type="match status" value="1"/>
</dbReference>
<dbReference type="InterPro" id="IPR001971">
    <property type="entry name" value="Ribosomal_uS11"/>
</dbReference>
<dbReference type="InterPro" id="IPR019981">
    <property type="entry name" value="Ribosomal_uS11_bac-type"/>
</dbReference>
<dbReference type="InterPro" id="IPR018102">
    <property type="entry name" value="Ribosomal_uS11_CS"/>
</dbReference>
<dbReference type="InterPro" id="IPR036967">
    <property type="entry name" value="Ribosomal_uS11_sf"/>
</dbReference>
<dbReference type="NCBIfam" id="NF003698">
    <property type="entry name" value="PRK05309.1"/>
    <property type="match status" value="1"/>
</dbReference>
<dbReference type="NCBIfam" id="TIGR03632">
    <property type="entry name" value="uS11_bact"/>
    <property type="match status" value="1"/>
</dbReference>
<dbReference type="PANTHER" id="PTHR11759">
    <property type="entry name" value="40S RIBOSOMAL PROTEIN S14/30S RIBOSOMAL PROTEIN S11"/>
    <property type="match status" value="1"/>
</dbReference>
<dbReference type="Pfam" id="PF00411">
    <property type="entry name" value="Ribosomal_S11"/>
    <property type="match status" value="1"/>
</dbReference>
<dbReference type="PIRSF" id="PIRSF002131">
    <property type="entry name" value="Ribosomal_S11"/>
    <property type="match status" value="1"/>
</dbReference>
<dbReference type="SUPFAM" id="SSF53137">
    <property type="entry name" value="Translational machinery components"/>
    <property type="match status" value="1"/>
</dbReference>
<dbReference type="PROSITE" id="PS00054">
    <property type="entry name" value="RIBOSOMAL_S11"/>
    <property type="match status" value="1"/>
</dbReference>
<gene>
    <name evidence="1" type="primary">rps11</name>
</gene>
<accession>Q8WHZ0</accession>
<reference key="1">
    <citation type="journal article" date="2004" name="Mol. Biol. Evol.">
        <title>Chloroplast phylogeny indicates that bryophytes are monophyletic.</title>
        <authorList>
            <person name="Nishiyama T."/>
            <person name="Wolf P.G."/>
            <person name="Kugita M."/>
            <person name="Sinclair R.B."/>
            <person name="Sugita M."/>
            <person name="Sugiura C."/>
            <person name="Wakasugi T."/>
            <person name="Yamada K."/>
            <person name="Yoshinaga K."/>
            <person name="Yamaguchi K."/>
            <person name="Ueda K."/>
            <person name="Hasebe M."/>
        </authorList>
    </citation>
    <scope>NUCLEOTIDE SEQUENCE [LARGE SCALE GENOMIC DNA]</scope>
    <source>
        <strain>Kingyoku</strain>
    </source>
</reference>
<sequence>MPKPIKRLSSHKKKRVIFKGIIQIKASFNNTIVTVTNSQGQVITWSSAGACGFKGTKRSTPFAAQIATENAIRTLISQGMKQAEVMISGPGPGRDTALRTIRKSGLVLHFVRDVTPLPHNGCRPPKRRRV</sequence>
<organism>
    <name type="scientific">Psilotum nudum</name>
    <name type="common">Whisk fern</name>
    <name type="synonym">Lycopodium nudum</name>
    <dbReference type="NCBI Taxonomy" id="3240"/>
    <lineage>
        <taxon>Eukaryota</taxon>
        <taxon>Viridiplantae</taxon>
        <taxon>Streptophyta</taxon>
        <taxon>Embryophyta</taxon>
        <taxon>Tracheophyta</taxon>
        <taxon>Polypodiopsida</taxon>
        <taxon>Ophioglossidae</taxon>
        <taxon>Psilotales</taxon>
        <taxon>Psilotaceae</taxon>
        <taxon>Psilotum</taxon>
    </lineage>
</organism>
<comment type="subunit">
    <text evidence="1">Part of the 30S ribosomal subunit.</text>
</comment>
<comment type="subcellular location">
    <subcellularLocation>
        <location>Plastid</location>
        <location>Chloroplast</location>
    </subcellularLocation>
</comment>
<comment type="similarity">
    <text evidence="1">Belongs to the universal ribosomal protein uS11 family.</text>
</comment>
<protein>
    <recommendedName>
        <fullName evidence="1">Small ribosomal subunit protein uS11c</fullName>
    </recommendedName>
    <alternativeName>
        <fullName evidence="2">30S ribosomal protein S11, chloroplastic</fullName>
    </alternativeName>
</protein>
<feature type="chain" id="PRO_0000123324" description="Small ribosomal subunit protein uS11c">
    <location>
        <begin position="1"/>
        <end position="130"/>
    </location>
</feature>
<keyword id="KW-0150">Chloroplast</keyword>
<keyword id="KW-0934">Plastid</keyword>
<keyword id="KW-0687">Ribonucleoprotein</keyword>
<keyword id="KW-0689">Ribosomal protein</keyword>
<keyword id="KW-0694">RNA-binding</keyword>
<keyword id="KW-0699">rRNA-binding</keyword>